<evidence type="ECO:0000255" key="1"/>
<evidence type="ECO:0000269" key="2">
    <source>
    </source>
</evidence>
<evidence type="ECO:0000303" key="3">
    <source>
    </source>
</evidence>
<evidence type="ECO:0000305" key="4">
    <source>
    </source>
</evidence>
<evidence type="ECO:0000312" key="5">
    <source>
        <dbReference type="Araport" id="AT1G71730"/>
    </source>
</evidence>
<evidence type="ECO:0000312" key="6">
    <source>
        <dbReference type="EMBL" id="AAF43226.1"/>
    </source>
</evidence>
<sequence length="177" mass="19578">MRLHSAITLRNLFTRKSLRIPQNLSITASPLLIGDVSGQIKPSSTSHYSKSSLSEASSSSSSSLIFQIPNNASFFLENQRRYSTGSSSGSPPDVNKVVDEINLKFAEAREEIEMAMDAKETVYFNEEAECARDAVAEVLEMFQGLLGKVTEKEKASLQRSMGLKIEQLKAELEQLNE</sequence>
<dbReference type="EMBL" id="EF094953">
    <property type="protein sequence ID" value="ABK91946.1"/>
    <property type="molecule type" value="mRNA"/>
</dbReference>
<dbReference type="EMBL" id="AC012654">
    <property type="protein sequence ID" value="AAF43226.1"/>
    <property type="molecule type" value="Genomic_DNA"/>
</dbReference>
<dbReference type="EMBL" id="CP002684">
    <property type="protein sequence ID" value="AEE35224.1"/>
    <property type="molecule type" value="Genomic_DNA"/>
</dbReference>
<dbReference type="EMBL" id="AF332454">
    <property type="protein sequence ID" value="AAG48817.1"/>
    <property type="molecule type" value="mRNA"/>
</dbReference>
<dbReference type="EMBL" id="AY050903">
    <property type="protein sequence ID" value="AAK93580.1"/>
    <property type="molecule type" value="mRNA"/>
</dbReference>
<dbReference type="EMBL" id="AY117214">
    <property type="protein sequence ID" value="AAM51289.1"/>
    <property type="molecule type" value="mRNA"/>
</dbReference>
<dbReference type="PIR" id="F96739">
    <property type="entry name" value="F96739"/>
</dbReference>
<dbReference type="RefSeq" id="NP_177318.1">
    <property type="nucleotide sequence ID" value="NM_105831.5"/>
</dbReference>
<dbReference type="SMR" id="Q9M9H3"/>
<dbReference type="FunCoup" id="Q9M9H3">
    <property type="interactions" value="374"/>
</dbReference>
<dbReference type="STRING" id="3702.Q9M9H3"/>
<dbReference type="iPTMnet" id="Q9M9H3"/>
<dbReference type="MetOSite" id="Q9M9H3"/>
<dbReference type="PaxDb" id="3702-AT1G71730.1"/>
<dbReference type="ProteomicsDB" id="252426"/>
<dbReference type="EnsemblPlants" id="AT1G71730.1">
    <property type="protein sequence ID" value="AT1G71730.1"/>
    <property type="gene ID" value="AT1G71730"/>
</dbReference>
<dbReference type="GeneID" id="843503"/>
<dbReference type="Gramene" id="AT1G71730.1">
    <property type="protein sequence ID" value="AT1G71730.1"/>
    <property type="gene ID" value="AT1G71730"/>
</dbReference>
<dbReference type="KEGG" id="ath:AT1G71730"/>
<dbReference type="Araport" id="AT1G71730"/>
<dbReference type="TAIR" id="AT1G71730"/>
<dbReference type="eggNOG" id="ENOG502SAT8">
    <property type="taxonomic scope" value="Eukaryota"/>
</dbReference>
<dbReference type="HOGENOM" id="CLU_130147_0_0_1"/>
<dbReference type="InParanoid" id="Q9M9H3"/>
<dbReference type="OMA" id="FFLENQR"/>
<dbReference type="PhylomeDB" id="Q9M9H3"/>
<dbReference type="PRO" id="PR:Q9M9H3"/>
<dbReference type="Proteomes" id="UP000006548">
    <property type="component" value="Chromosome 1"/>
</dbReference>
<dbReference type="ExpressionAtlas" id="Q9M9H3">
    <property type="expression patterns" value="baseline and differential"/>
</dbReference>
<dbReference type="GO" id="GO:0005829">
    <property type="term" value="C:cytosol"/>
    <property type="evidence" value="ECO:0007005"/>
    <property type="project" value="TAIR"/>
</dbReference>
<dbReference type="GO" id="GO:0005739">
    <property type="term" value="C:mitochondrion"/>
    <property type="evidence" value="ECO:0007005"/>
    <property type="project" value="TAIR"/>
</dbReference>
<dbReference type="GO" id="GO:0005634">
    <property type="term" value="C:nucleus"/>
    <property type="evidence" value="ECO:0000305"/>
    <property type="project" value="UniProtKB"/>
</dbReference>
<dbReference type="GO" id="GO:0009409">
    <property type="term" value="P:response to cold"/>
    <property type="evidence" value="ECO:0000270"/>
    <property type="project" value="UniProtKB"/>
</dbReference>
<dbReference type="GO" id="GO:0009651">
    <property type="term" value="P:response to salt stress"/>
    <property type="evidence" value="ECO:0000270"/>
    <property type="project" value="UniProtKB"/>
</dbReference>
<dbReference type="GO" id="GO:0045815">
    <property type="term" value="P:transcription initiation-coupled chromatin remodeling"/>
    <property type="evidence" value="ECO:0000314"/>
    <property type="project" value="UniProtKB"/>
</dbReference>
<dbReference type="InterPro" id="IPR053325">
    <property type="entry name" value="H3-Acetyl_Activator"/>
</dbReference>
<dbReference type="PANTHER" id="PTHR35706:SF1">
    <property type="entry name" value="EMBRYOGENESIS-LIKE PROTEIN"/>
    <property type="match status" value="1"/>
</dbReference>
<dbReference type="PANTHER" id="PTHR35706">
    <property type="entry name" value="F14O23.11 PROTEIN"/>
    <property type="match status" value="1"/>
</dbReference>
<proteinExistence type="evidence at protein level"/>
<accession>Q9M9H3</accession>
<protein>
    <recommendedName>
        <fullName evidence="3">Embryogenesis-like protein</fullName>
        <shortName evidence="3">AtEML</shortName>
        <shortName evidence="3">EMB-like protein</shortName>
    </recommendedName>
</protein>
<comment type="function">
    <text evidence="2">Activates gene expression by recruiting HAG1/GCN5 and triggering subsequent histone H3 acetylation of target genes promoters.</text>
</comment>
<comment type="subunit">
    <text evidence="2">Interacts with HAG1/GCN5.</text>
</comment>
<comment type="subcellular location">
    <subcellularLocation>
        <location evidence="4">Nucleus</location>
    </subcellularLocation>
</comment>
<comment type="tissue specificity">
    <text evidence="2">Expressed in flowers, leaves, stems and siliques.</text>
</comment>
<comment type="induction">
    <text evidence="2">Induced by cold and salt (PubMed:17151888). Probably repressed by HAG1/GCN5 (PubMed:17151888).</text>
</comment>
<keyword id="KW-0010">Activator</keyword>
<keyword id="KW-0175">Coiled coil</keyword>
<keyword id="KW-0539">Nucleus</keyword>
<keyword id="KW-1185">Reference proteome</keyword>
<keyword id="KW-0804">Transcription</keyword>
<keyword id="KW-0805">Transcription regulation</keyword>
<feature type="chain" id="PRO_0000452701" description="Embryogenesis-like protein">
    <location>
        <begin position="1"/>
        <end position="177"/>
    </location>
</feature>
<feature type="coiled-coil region" evidence="1">
    <location>
        <begin position="98"/>
        <end position="118"/>
    </location>
</feature>
<organism>
    <name type="scientific">Arabidopsis thaliana</name>
    <name type="common">Mouse-ear cress</name>
    <dbReference type="NCBI Taxonomy" id="3702"/>
    <lineage>
        <taxon>Eukaryota</taxon>
        <taxon>Viridiplantae</taxon>
        <taxon>Streptophyta</taxon>
        <taxon>Embryophyta</taxon>
        <taxon>Tracheophyta</taxon>
        <taxon>Spermatophyta</taxon>
        <taxon>Magnoliopsida</taxon>
        <taxon>eudicotyledons</taxon>
        <taxon>Gunneridae</taxon>
        <taxon>Pentapetalae</taxon>
        <taxon>rosids</taxon>
        <taxon>malvids</taxon>
        <taxon>Brassicales</taxon>
        <taxon>Brassicaceae</taxon>
        <taxon>Camelineae</taxon>
        <taxon>Arabidopsis</taxon>
    </lineage>
</organism>
<gene>
    <name evidence="3" type="primary">EML</name>
    <name evidence="5" type="ordered locus">At1g71730</name>
    <name evidence="6" type="ORF">F14O23.11</name>
</gene>
<reference key="1">
    <citation type="journal article" date="2007" name="Planta">
        <title>Isolation and characterization of a GCN5-interacting protein from Arabidopsis thaliana.</title>
        <authorList>
            <person name="Gao M.J."/>
            <person name="Hegedus D.D."/>
            <person name="Sharpe A.G."/>
            <person name="Robinson S.J."/>
            <person name="Lydiate D.J."/>
            <person name="Hannoufa A."/>
        </authorList>
    </citation>
    <scope>NUCLEOTIDE SEQUENCE [MRNA]</scope>
    <scope>FUNCTION</scope>
    <scope>INTERACTION WITH HAG1/GCN5</scope>
    <scope>TISSUE SPECIFICITY</scope>
    <scope>INDUCTION BY COLD AND SALT</scope>
    <source>
        <strain>cv. Columbia</strain>
    </source>
</reference>
<reference key="2">
    <citation type="journal article" date="2000" name="Nature">
        <title>Sequence and analysis of chromosome 1 of the plant Arabidopsis thaliana.</title>
        <authorList>
            <person name="Theologis A."/>
            <person name="Ecker J.R."/>
            <person name="Palm C.J."/>
            <person name="Federspiel N.A."/>
            <person name="Kaul S."/>
            <person name="White O."/>
            <person name="Alonso J."/>
            <person name="Altafi H."/>
            <person name="Araujo R."/>
            <person name="Bowman C.L."/>
            <person name="Brooks S.Y."/>
            <person name="Buehler E."/>
            <person name="Chan A."/>
            <person name="Chao Q."/>
            <person name="Chen H."/>
            <person name="Cheuk R.F."/>
            <person name="Chin C.W."/>
            <person name="Chung M.K."/>
            <person name="Conn L."/>
            <person name="Conway A.B."/>
            <person name="Conway A.R."/>
            <person name="Creasy T.H."/>
            <person name="Dewar K."/>
            <person name="Dunn P."/>
            <person name="Etgu P."/>
            <person name="Feldblyum T.V."/>
            <person name="Feng J.-D."/>
            <person name="Fong B."/>
            <person name="Fujii C.Y."/>
            <person name="Gill J.E."/>
            <person name="Goldsmith A.D."/>
            <person name="Haas B."/>
            <person name="Hansen N.F."/>
            <person name="Hughes B."/>
            <person name="Huizar L."/>
            <person name="Hunter J.L."/>
            <person name="Jenkins J."/>
            <person name="Johnson-Hopson C."/>
            <person name="Khan S."/>
            <person name="Khaykin E."/>
            <person name="Kim C.J."/>
            <person name="Koo H.L."/>
            <person name="Kremenetskaia I."/>
            <person name="Kurtz D.B."/>
            <person name="Kwan A."/>
            <person name="Lam B."/>
            <person name="Langin-Hooper S."/>
            <person name="Lee A."/>
            <person name="Lee J.M."/>
            <person name="Lenz C.A."/>
            <person name="Li J.H."/>
            <person name="Li Y.-P."/>
            <person name="Lin X."/>
            <person name="Liu S.X."/>
            <person name="Liu Z.A."/>
            <person name="Luros J.S."/>
            <person name="Maiti R."/>
            <person name="Marziali A."/>
            <person name="Militscher J."/>
            <person name="Miranda M."/>
            <person name="Nguyen M."/>
            <person name="Nierman W.C."/>
            <person name="Osborne B.I."/>
            <person name="Pai G."/>
            <person name="Peterson J."/>
            <person name="Pham P.K."/>
            <person name="Rizzo M."/>
            <person name="Rooney T."/>
            <person name="Rowley D."/>
            <person name="Sakano H."/>
            <person name="Salzberg S.L."/>
            <person name="Schwartz J.R."/>
            <person name="Shinn P."/>
            <person name="Southwick A.M."/>
            <person name="Sun H."/>
            <person name="Tallon L.J."/>
            <person name="Tambunga G."/>
            <person name="Toriumi M.J."/>
            <person name="Town C.D."/>
            <person name="Utterback T."/>
            <person name="Van Aken S."/>
            <person name="Vaysberg M."/>
            <person name="Vysotskaia V.S."/>
            <person name="Walker M."/>
            <person name="Wu D."/>
            <person name="Yu G."/>
            <person name="Fraser C.M."/>
            <person name="Venter J.C."/>
            <person name="Davis R.W."/>
        </authorList>
    </citation>
    <scope>NUCLEOTIDE SEQUENCE [LARGE SCALE GENOMIC DNA]</scope>
    <source>
        <strain>cv. Columbia</strain>
    </source>
</reference>
<reference key="3">
    <citation type="journal article" date="2017" name="Plant J.">
        <title>Araport11: a complete reannotation of the Arabidopsis thaliana reference genome.</title>
        <authorList>
            <person name="Cheng C.Y."/>
            <person name="Krishnakumar V."/>
            <person name="Chan A.P."/>
            <person name="Thibaud-Nissen F."/>
            <person name="Schobel S."/>
            <person name="Town C.D."/>
        </authorList>
    </citation>
    <scope>GENOME REANNOTATION</scope>
    <source>
        <strain>cv. Columbia</strain>
    </source>
</reference>
<reference key="4">
    <citation type="journal article" date="2003" name="Science">
        <title>Empirical analysis of transcriptional activity in the Arabidopsis genome.</title>
        <authorList>
            <person name="Yamada K."/>
            <person name="Lim J."/>
            <person name="Dale J.M."/>
            <person name="Chen H."/>
            <person name="Shinn P."/>
            <person name="Palm C.J."/>
            <person name="Southwick A.M."/>
            <person name="Wu H.C."/>
            <person name="Kim C.J."/>
            <person name="Nguyen M."/>
            <person name="Pham P.K."/>
            <person name="Cheuk R.F."/>
            <person name="Karlin-Newmann G."/>
            <person name="Liu S.X."/>
            <person name="Lam B."/>
            <person name="Sakano H."/>
            <person name="Wu T."/>
            <person name="Yu G."/>
            <person name="Miranda M."/>
            <person name="Quach H.L."/>
            <person name="Tripp M."/>
            <person name="Chang C.H."/>
            <person name="Lee J.M."/>
            <person name="Toriumi M.J."/>
            <person name="Chan M.M."/>
            <person name="Tang C.C."/>
            <person name="Onodera C.S."/>
            <person name="Deng J.M."/>
            <person name="Akiyama K."/>
            <person name="Ansari Y."/>
            <person name="Arakawa T."/>
            <person name="Banh J."/>
            <person name="Banno F."/>
            <person name="Bowser L."/>
            <person name="Brooks S.Y."/>
            <person name="Carninci P."/>
            <person name="Chao Q."/>
            <person name="Choy N."/>
            <person name="Enju A."/>
            <person name="Goldsmith A.D."/>
            <person name="Gurjal M."/>
            <person name="Hansen N.F."/>
            <person name="Hayashizaki Y."/>
            <person name="Johnson-Hopson C."/>
            <person name="Hsuan V.W."/>
            <person name="Iida K."/>
            <person name="Karnes M."/>
            <person name="Khan S."/>
            <person name="Koesema E."/>
            <person name="Ishida J."/>
            <person name="Jiang P.X."/>
            <person name="Jones T."/>
            <person name="Kawai J."/>
            <person name="Kamiya A."/>
            <person name="Meyers C."/>
            <person name="Nakajima M."/>
            <person name="Narusaka M."/>
            <person name="Seki M."/>
            <person name="Sakurai T."/>
            <person name="Satou M."/>
            <person name="Tamse R."/>
            <person name="Vaysberg M."/>
            <person name="Wallender E.K."/>
            <person name="Wong C."/>
            <person name="Yamamura Y."/>
            <person name="Yuan S."/>
            <person name="Shinozaki K."/>
            <person name="Davis R.W."/>
            <person name="Theologis A."/>
            <person name="Ecker J.R."/>
        </authorList>
    </citation>
    <scope>NUCLEOTIDE SEQUENCE [LARGE SCALE MRNA]</scope>
    <source>
        <strain>cv. Columbia</strain>
    </source>
</reference>
<name>EML_ARATH</name>